<protein>
    <recommendedName>
        <fullName evidence="7">Contryphan-Ze</fullName>
    </recommendedName>
    <alternativeName>
        <fullName evidence="8">Z1187</fullName>
    </alternativeName>
</protein>
<keyword id="KW-0027">Amidation</keyword>
<keyword id="KW-0208">D-amino acid</keyword>
<keyword id="KW-0903">Direct protein sequencing</keyword>
<keyword id="KW-1015">Disulfide bond</keyword>
<keyword id="KW-0379">Hydroxylation</keyword>
<keyword id="KW-0872">Ion channel impairing toxin</keyword>
<keyword id="KW-0528">Neurotoxin</keyword>
<keyword id="KW-0964">Secreted</keyword>
<keyword id="KW-0800">Toxin</keyword>
<name>COW_CONZE</name>
<comment type="function">
    <text evidence="1 2 4 5">Its target is unknown, but this toxin may modulate voltage-activated calcium channels (Cav) or calcium-dependent potassium channels (KCa).</text>
</comment>
<comment type="subcellular location">
    <subcellularLocation>
        <location evidence="6">Secreted</location>
    </subcellularLocation>
</comment>
<comment type="tissue specificity">
    <text evidence="8">Expressed by the venom duct.</text>
</comment>
<comment type="domain">
    <text evidence="7">The cysteine framework is C-C.</text>
</comment>
<comment type="mass spectrometry"/>
<comment type="miscellaneous">
    <text evidence="3">Exists in two forms, due to cis-trans isomerization at 4-Cys-hydroxyPro-5. The cis conformation is the major form.</text>
</comment>
<comment type="similarity">
    <text evidence="7">Belongs to the O2 superfamily. Contryphan family.</text>
</comment>
<organism>
    <name type="scientific">Conus zeylanicus</name>
    <name type="common">Obese cone</name>
    <name type="synonym">Puncticulis zeylanicus</name>
    <dbReference type="NCBI Taxonomy" id="1519886"/>
    <lineage>
        <taxon>Eukaryota</taxon>
        <taxon>Metazoa</taxon>
        <taxon>Spiralia</taxon>
        <taxon>Lophotrochozoa</taxon>
        <taxon>Mollusca</taxon>
        <taxon>Gastropoda</taxon>
        <taxon>Caenogastropoda</taxon>
        <taxon>Neogastropoda</taxon>
        <taxon>Conoidea</taxon>
        <taxon>Conidae</taxon>
        <taxon>Conus</taxon>
    </lineage>
</organism>
<accession>P0DP18</accession>
<dbReference type="GO" id="GO:0005576">
    <property type="term" value="C:extracellular region"/>
    <property type="evidence" value="ECO:0007669"/>
    <property type="project" value="UniProtKB-SubCell"/>
</dbReference>
<dbReference type="GO" id="GO:0099106">
    <property type="term" value="F:ion channel regulator activity"/>
    <property type="evidence" value="ECO:0007669"/>
    <property type="project" value="UniProtKB-KW"/>
</dbReference>
<dbReference type="GO" id="GO:0090729">
    <property type="term" value="F:toxin activity"/>
    <property type="evidence" value="ECO:0007669"/>
    <property type="project" value="UniProtKB-KW"/>
</dbReference>
<dbReference type="InterPro" id="IPR011062">
    <property type="entry name" value="Contryphan_CS"/>
</dbReference>
<dbReference type="PROSITE" id="PS60027">
    <property type="entry name" value="CONTRYPHAN"/>
    <property type="match status" value="1"/>
</dbReference>
<evidence type="ECO:0000250" key="1">
    <source>
        <dbReference type="UniProtKB" id="P0C248"/>
    </source>
</evidence>
<evidence type="ECO:0000250" key="2">
    <source>
        <dbReference type="UniProtKB" id="P0C250"/>
    </source>
</evidence>
<evidence type="ECO:0000250" key="3">
    <source>
        <dbReference type="UniProtKB" id="P58787"/>
    </source>
</evidence>
<evidence type="ECO:0000250" key="4">
    <source>
        <dbReference type="UniProtKB" id="P62903"/>
    </source>
</evidence>
<evidence type="ECO:0000250" key="5">
    <source>
        <dbReference type="UniProtKB" id="P83047"/>
    </source>
</evidence>
<evidence type="ECO:0000269" key="6">
    <source>
    </source>
</evidence>
<evidence type="ECO:0000305" key="7"/>
<evidence type="ECO:0000305" key="8">
    <source>
    </source>
</evidence>
<reference key="1">
    <citation type="journal article" date="2007" name="Rapid Commun. Mass Spectrom.">
        <title>Rapid mass spectral identification of contryphans. Detection of characteristic peptide ions by fragmentation of intact disulfide-bonded peptides in crude venom.</title>
        <authorList>
            <person name="Thakur S.S."/>
            <person name="Balaram P."/>
        </authorList>
    </citation>
    <scope>PROTEIN SEQUENCE</scope>
    <scope>IDENTIFICATION BY MASS SPECTROMETRY</scope>
    <scope>MASS SPECTROMETRY</scope>
    <scope>SUBCELLULAR LOCATION</scope>
    <scope>HYDROXYLATION AT PRO-5</scope>
    <scope>D-AMINO ACID AT TRP-6</scope>
    <scope>AMIDATION AT CYS-10</scope>
    <source>
        <tissue>Venom</tissue>
    </source>
</reference>
<sequence>VVGCPWQPWC</sequence>
<proteinExistence type="evidence at protein level"/>
<feature type="peptide" id="PRO_0000439689" description="Contryphan-Ze" evidence="6">
    <location>
        <begin position="1"/>
        <end position="10"/>
    </location>
</feature>
<feature type="modified residue" description="4-hydroxyproline" evidence="6">
    <location>
        <position position="5"/>
    </location>
</feature>
<feature type="modified residue" description="D-tryptophan" evidence="6">
    <location>
        <position position="6"/>
    </location>
</feature>
<feature type="modified residue" description="Cysteine amide" evidence="6">
    <location>
        <position position="10"/>
    </location>
</feature>
<feature type="disulfide bond" evidence="8">
    <location>
        <begin position="4"/>
        <end position="10"/>
    </location>
</feature>